<gene>
    <name evidence="1" type="primary">mrnC</name>
    <name type="ordered locus">slr0954</name>
</gene>
<proteinExistence type="inferred from homology"/>
<accession>P74327</accession>
<evidence type="ECO:0000255" key="1">
    <source>
        <dbReference type="HAMAP-Rule" id="MF_01468"/>
    </source>
</evidence>
<name>MRNC_SYNY3</name>
<keyword id="KW-0963">Cytoplasm</keyword>
<keyword id="KW-0255">Endonuclease</keyword>
<keyword id="KW-0378">Hydrolase</keyword>
<keyword id="KW-0460">Magnesium</keyword>
<keyword id="KW-0540">Nuclease</keyword>
<keyword id="KW-1185">Reference proteome</keyword>
<keyword id="KW-0690">Ribosome biogenesis</keyword>
<keyword id="KW-0694">RNA-binding</keyword>
<keyword id="KW-0698">rRNA processing</keyword>
<keyword id="KW-0699">rRNA-binding</keyword>
<organism>
    <name type="scientific">Synechocystis sp. (strain ATCC 27184 / PCC 6803 / Kazusa)</name>
    <dbReference type="NCBI Taxonomy" id="1111708"/>
    <lineage>
        <taxon>Bacteria</taxon>
        <taxon>Bacillati</taxon>
        <taxon>Cyanobacteriota</taxon>
        <taxon>Cyanophyceae</taxon>
        <taxon>Synechococcales</taxon>
        <taxon>Merismopediaceae</taxon>
        <taxon>Synechocystis</taxon>
    </lineage>
</organism>
<reference key="1">
    <citation type="journal article" date="1996" name="DNA Res.">
        <title>Sequence analysis of the genome of the unicellular cyanobacterium Synechocystis sp. strain PCC6803. II. Sequence determination of the entire genome and assignment of potential protein-coding regions.</title>
        <authorList>
            <person name="Kaneko T."/>
            <person name="Sato S."/>
            <person name="Kotani H."/>
            <person name="Tanaka A."/>
            <person name="Asamizu E."/>
            <person name="Nakamura Y."/>
            <person name="Miyajima N."/>
            <person name="Hirosawa M."/>
            <person name="Sugiura M."/>
            <person name="Sasamoto S."/>
            <person name="Kimura T."/>
            <person name="Hosouchi T."/>
            <person name="Matsuno A."/>
            <person name="Muraki A."/>
            <person name="Nakazaki N."/>
            <person name="Naruo K."/>
            <person name="Okumura S."/>
            <person name="Shimpo S."/>
            <person name="Takeuchi C."/>
            <person name="Wada T."/>
            <person name="Watanabe A."/>
            <person name="Yamada M."/>
            <person name="Yasuda M."/>
            <person name="Tabata S."/>
        </authorList>
    </citation>
    <scope>NUCLEOTIDE SEQUENCE [LARGE SCALE GENOMIC DNA]</scope>
    <source>
        <strain>ATCC 27184 / PCC 6803 / Kazusa</strain>
    </source>
</reference>
<protein>
    <recommendedName>
        <fullName evidence="1">Mini-ribonuclease 3</fullName>
        <shortName evidence="1">Mini-3</shortName>
        <shortName evidence="1">Mini-RNase 3</shortName>
        <ecNumber evidence="1">3.1.26.-</ecNumber>
    </recommendedName>
    <alternativeName>
        <fullName evidence="1">Mini-RNase III</fullName>
        <shortName evidence="1">Mini-III</shortName>
    </alternativeName>
</protein>
<dbReference type="EC" id="3.1.26.-" evidence="1"/>
<dbReference type="EMBL" id="BA000022">
    <property type="protein sequence ID" value="BAA18421.1"/>
    <property type="molecule type" value="Genomic_DNA"/>
</dbReference>
<dbReference type="PIR" id="S76162">
    <property type="entry name" value="S76162"/>
</dbReference>
<dbReference type="SMR" id="P74327"/>
<dbReference type="FunCoup" id="P74327">
    <property type="interactions" value="144"/>
</dbReference>
<dbReference type="IntAct" id="P74327">
    <property type="interactions" value="1"/>
</dbReference>
<dbReference type="STRING" id="1148.gene:10499297"/>
<dbReference type="PaxDb" id="1148-1653508"/>
<dbReference type="EnsemblBacteria" id="BAA18421">
    <property type="protein sequence ID" value="BAA18421"/>
    <property type="gene ID" value="BAA18421"/>
</dbReference>
<dbReference type="KEGG" id="syn:slr0954"/>
<dbReference type="eggNOG" id="COG1939">
    <property type="taxonomic scope" value="Bacteria"/>
</dbReference>
<dbReference type="InParanoid" id="P74327"/>
<dbReference type="PhylomeDB" id="P74327"/>
<dbReference type="Proteomes" id="UP000001425">
    <property type="component" value="Chromosome"/>
</dbReference>
<dbReference type="GO" id="GO:0005737">
    <property type="term" value="C:cytoplasm"/>
    <property type="evidence" value="ECO:0007669"/>
    <property type="project" value="UniProtKB-SubCell"/>
</dbReference>
<dbReference type="GO" id="GO:0004525">
    <property type="term" value="F:ribonuclease III activity"/>
    <property type="evidence" value="ECO:0007669"/>
    <property type="project" value="InterPro"/>
</dbReference>
<dbReference type="GO" id="GO:0019843">
    <property type="term" value="F:rRNA binding"/>
    <property type="evidence" value="ECO:0007669"/>
    <property type="project" value="UniProtKB-UniRule"/>
</dbReference>
<dbReference type="GO" id="GO:0006364">
    <property type="term" value="P:rRNA processing"/>
    <property type="evidence" value="ECO:0007669"/>
    <property type="project" value="UniProtKB-UniRule"/>
</dbReference>
<dbReference type="CDD" id="cd00593">
    <property type="entry name" value="RIBOc"/>
    <property type="match status" value="1"/>
</dbReference>
<dbReference type="Gene3D" id="1.10.1520.10">
    <property type="entry name" value="Ribonuclease III domain"/>
    <property type="match status" value="1"/>
</dbReference>
<dbReference type="HAMAP" id="MF_01468">
    <property type="entry name" value="RNase_Mini_III"/>
    <property type="match status" value="1"/>
</dbReference>
<dbReference type="InterPro" id="IPR008226">
    <property type="entry name" value="Mini3_fam"/>
</dbReference>
<dbReference type="InterPro" id="IPR000999">
    <property type="entry name" value="RNase_III_dom"/>
</dbReference>
<dbReference type="InterPro" id="IPR036389">
    <property type="entry name" value="RNase_III_sf"/>
</dbReference>
<dbReference type="PANTHER" id="PTHR34276">
    <property type="entry name" value="MINI-RIBONUCLEASE 3"/>
    <property type="match status" value="1"/>
</dbReference>
<dbReference type="PANTHER" id="PTHR34276:SF1">
    <property type="entry name" value="MINI-RIBONUCLEASE 3"/>
    <property type="match status" value="1"/>
</dbReference>
<dbReference type="Pfam" id="PF00636">
    <property type="entry name" value="Ribonuclease_3"/>
    <property type="match status" value="1"/>
</dbReference>
<dbReference type="PIRSF" id="PIRSF005520">
    <property type="entry name" value="UCP005520"/>
    <property type="match status" value="1"/>
</dbReference>
<dbReference type="SMART" id="SM00535">
    <property type="entry name" value="RIBOc"/>
    <property type="match status" value="1"/>
</dbReference>
<dbReference type="SUPFAM" id="SSF69065">
    <property type="entry name" value="RNase III domain-like"/>
    <property type="match status" value="1"/>
</dbReference>
<feature type="chain" id="PRO_0000415995" description="Mini-ribonuclease 3">
    <location>
        <begin position="1"/>
        <end position="143"/>
    </location>
</feature>
<feature type="active site" evidence="1">
    <location>
        <position position="35"/>
    </location>
</feature>
<comment type="function">
    <text evidence="1">Involved in correct processing of both the 5' and 3' ends of 23S rRNA precursor. Processes 30S rRNA precursor transcript even in absence of ribonuclease 3 (Rnc); Rnc processes 30S rRNA into smaller rRNA precursors.</text>
</comment>
<comment type="cofactor">
    <cofactor evidence="1">
        <name>Mg(2+)</name>
        <dbReference type="ChEBI" id="CHEBI:18420"/>
    </cofactor>
</comment>
<comment type="subunit">
    <text evidence="1">Homodimer.</text>
</comment>
<comment type="subcellular location">
    <subcellularLocation>
        <location evidence="1">Cytoplasm</location>
    </subcellularLocation>
</comment>
<comment type="similarity">
    <text evidence="1">Belongs to the MrnC RNase family.</text>
</comment>
<sequence>MTQFDDHPLWQSSLNPADAPAVQSLSPVALAYLGDAVFELYVRCCYLFPPRRIGDFHRRVVAQVRAEQQAQILTTLLPQLTDPEKEWVRRGRNAATSTSRRANPELYQAASGLETLLGYLYLRDARRLDELLALIELPDAAPR</sequence>